<reference key="1">
    <citation type="submission" date="2007-02" db="EMBL/GenBank/DDBJ databases">
        <title>Complete sequence of Clostridium thermocellum ATCC 27405.</title>
        <authorList>
            <consortium name="US DOE Joint Genome Institute"/>
            <person name="Copeland A."/>
            <person name="Lucas S."/>
            <person name="Lapidus A."/>
            <person name="Barry K."/>
            <person name="Detter J.C."/>
            <person name="Glavina del Rio T."/>
            <person name="Hammon N."/>
            <person name="Israni S."/>
            <person name="Dalin E."/>
            <person name="Tice H."/>
            <person name="Pitluck S."/>
            <person name="Chertkov O."/>
            <person name="Brettin T."/>
            <person name="Bruce D."/>
            <person name="Han C."/>
            <person name="Tapia R."/>
            <person name="Gilna P."/>
            <person name="Schmutz J."/>
            <person name="Larimer F."/>
            <person name="Land M."/>
            <person name="Hauser L."/>
            <person name="Kyrpides N."/>
            <person name="Mikhailova N."/>
            <person name="Wu J.H.D."/>
            <person name="Newcomb M."/>
            <person name="Richardson P."/>
        </authorList>
    </citation>
    <scope>NUCLEOTIDE SEQUENCE [LARGE SCALE GENOMIC DNA]</scope>
    <source>
        <strain>ATCC 27405 / DSM 1237 / JCM 9322 / NBRC 103400 / NCIMB 10682 / NRRL B-4536 / VPI 7372</strain>
    </source>
</reference>
<proteinExistence type="inferred from homology"/>
<feature type="chain" id="PRO_0000295968" description="Small ribosomal subunit protein uS12">
    <location>
        <begin position="1"/>
        <end position="142"/>
    </location>
</feature>
<feature type="region of interest" description="Disordered" evidence="3">
    <location>
        <begin position="1"/>
        <end position="22"/>
    </location>
</feature>
<feature type="compositionally biased region" description="Basic residues" evidence="3">
    <location>
        <begin position="9"/>
        <end position="19"/>
    </location>
</feature>
<feature type="modified residue" description="3-methylthioaspartic acid" evidence="1">
    <location>
        <position position="102"/>
    </location>
</feature>
<organism>
    <name type="scientific">Acetivibrio thermocellus (strain ATCC 27405 / DSM 1237 / JCM 9322 / NBRC 103400 / NCIMB 10682 / NRRL B-4536 / VPI 7372)</name>
    <name type="common">Clostridium thermocellum</name>
    <dbReference type="NCBI Taxonomy" id="203119"/>
    <lineage>
        <taxon>Bacteria</taxon>
        <taxon>Bacillati</taxon>
        <taxon>Bacillota</taxon>
        <taxon>Clostridia</taxon>
        <taxon>Eubacteriales</taxon>
        <taxon>Oscillospiraceae</taxon>
        <taxon>Acetivibrio</taxon>
    </lineage>
</organism>
<keyword id="KW-0488">Methylation</keyword>
<keyword id="KW-1185">Reference proteome</keyword>
<keyword id="KW-0687">Ribonucleoprotein</keyword>
<keyword id="KW-0689">Ribosomal protein</keyword>
<keyword id="KW-0694">RNA-binding</keyword>
<keyword id="KW-0699">rRNA-binding</keyword>
<keyword id="KW-0820">tRNA-binding</keyword>
<name>RS12_ACET2</name>
<evidence type="ECO:0000250" key="1"/>
<evidence type="ECO:0000255" key="2">
    <source>
        <dbReference type="HAMAP-Rule" id="MF_00403"/>
    </source>
</evidence>
<evidence type="ECO:0000256" key="3">
    <source>
        <dbReference type="SAM" id="MobiDB-lite"/>
    </source>
</evidence>
<evidence type="ECO:0000305" key="4"/>
<gene>
    <name evidence="2" type="primary">rpsL</name>
    <name type="ordered locus">Cthe_2727</name>
</gene>
<dbReference type="EMBL" id="CP000568">
    <property type="protein sequence ID" value="ABN53926.1"/>
    <property type="molecule type" value="Genomic_DNA"/>
</dbReference>
<dbReference type="RefSeq" id="WP_003514304.1">
    <property type="nucleotide sequence ID" value="NC_009012.1"/>
</dbReference>
<dbReference type="SMR" id="A3DIZ7"/>
<dbReference type="STRING" id="203119.Cthe_2727"/>
<dbReference type="GeneID" id="35804281"/>
<dbReference type="KEGG" id="cth:Cthe_2727"/>
<dbReference type="eggNOG" id="COG0048">
    <property type="taxonomic scope" value="Bacteria"/>
</dbReference>
<dbReference type="HOGENOM" id="CLU_104295_1_2_9"/>
<dbReference type="OrthoDB" id="9802366at2"/>
<dbReference type="Proteomes" id="UP000002145">
    <property type="component" value="Chromosome"/>
</dbReference>
<dbReference type="GO" id="GO:0015935">
    <property type="term" value="C:small ribosomal subunit"/>
    <property type="evidence" value="ECO:0007669"/>
    <property type="project" value="InterPro"/>
</dbReference>
<dbReference type="GO" id="GO:0019843">
    <property type="term" value="F:rRNA binding"/>
    <property type="evidence" value="ECO:0007669"/>
    <property type="project" value="UniProtKB-UniRule"/>
</dbReference>
<dbReference type="GO" id="GO:0003735">
    <property type="term" value="F:structural constituent of ribosome"/>
    <property type="evidence" value="ECO:0007669"/>
    <property type="project" value="InterPro"/>
</dbReference>
<dbReference type="GO" id="GO:0000049">
    <property type="term" value="F:tRNA binding"/>
    <property type="evidence" value="ECO:0007669"/>
    <property type="project" value="UniProtKB-UniRule"/>
</dbReference>
<dbReference type="GO" id="GO:0006412">
    <property type="term" value="P:translation"/>
    <property type="evidence" value="ECO:0007669"/>
    <property type="project" value="UniProtKB-UniRule"/>
</dbReference>
<dbReference type="CDD" id="cd03368">
    <property type="entry name" value="Ribosomal_S12"/>
    <property type="match status" value="1"/>
</dbReference>
<dbReference type="FunFam" id="2.40.50.140:FF:000001">
    <property type="entry name" value="30S ribosomal protein S12"/>
    <property type="match status" value="1"/>
</dbReference>
<dbReference type="Gene3D" id="2.40.50.140">
    <property type="entry name" value="Nucleic acid-binding proteins"/>
    <property type="match status" value="1"/>
</dbReference>
<dbReference type="HAMAP" id="MF_00403_B">
    <property type="entry name" value="Ribosomal_uS12_B"/>
    <property type="match status" value="1"/>
</dbReference>
<dbReference type="InterPro" id="IPR012340">
    <property type="entry name" value="NA-bd_OB-fold"/>
</dbReference>
<dbReference type="InterPro" id="IPR006032">
    <property type="entry name" value="Ribosomal_uS12"/>
</dbReference>
<dbReference type="InterPro" id="IPR005679">
    <property type="entry name" value="Ribosomal_uS12_bac"/>
</dbReference>
<dbReference type="NCBIfam" id="TIGR00981">
    <property type="entry name" value="rpsL_bact"/>
    <property type="match status" value="1"/>
</dbReference>
<dbReference type="PANTHER" id="PTHR11652">
    <property type="entry name" value="30S RIBOSOMAL PROTEIN S12 FAMILY MEMBER"/>
    <property type="match status" value="1"/>
</dbReference>
<dbReference type="Pfam" id="PF00164">
    <property type="entry name" value="Ribosom_S12_S23"/>
    <property type="match status" value="1"/>
</dbReference>
<dbReference type="PIRSF" id="PIRSF002133">
    <property type="entry name" value="Ribosomal_S12/S23"/>
    <property type="match status" value="1"/>
</dbReference>
<dbReference type="PRINTS" id="PR01034">
    <property type="entry name" value="RIBOSOMALS12"/>
</dbReference>
<dbReference type="SUPFAM" id="SSF50249">
    <property type="entry name" value="Nucleic acid-binding proteins"/>
    <property type="match status" value="1"/>
</dbReference>
<dbReference type="PROSITE" id="PS00055">
    <property type="entry name" value="RIBOSOMAL_S12"/>
    <property type="match status" value="1"/>
</dbReference>
<protein>
    <recommendedName>
        <fullName evidence="2">Small ribosomal subunit protein uS12</fullName>
    </recommendedName>
    <alternativeName>
        <fullName evidence="4">30S ribosomal protein S12</fullName>
    </alternativeName>
</protein>
<accession>A3DIZ7</accession>
<comment type="function">
    <text evidence="2">With S4 and S5 plays an important role in translational accuracy.</text>
</comment>
<comment type="function">
    <text evidence="2">Interacts with and stabilizes bases of the 16S rRNA that are involved in tRNA selection in the A site and with the mRNA backbone. Located at the interface of the 30S and 50S subunits, it traverses the body of the 30S subunit contacting proteins on the other side and probably holding the rRNA structure together. The combined cluster of proteins S8, S12 and S17 appears to hold together the shoulder and platform of the 30S subunit.</text>
</comment>
<comment type="subunit">
    <text evidence="2">Part of the 30S ribosomal subunit. Contacts proteins S8 and S17. May interact with IF1 in the 30S initiation complex.</text>
</comment>
<comment type="similarity">
    <text evidence="2">Belongs to the universal ribosomal protein uS12 family.</text>
</comment>
<sequence length="142" mass="15425">MPTFNQLVRKGRKAAKKKSTAPALQKGFNSLKKVQTDISCPQKRGVCTVVKTTTPKKPNSALRKIARVRLTNGIEVTAYIPGIGHNLQEHSVVLIRGGRVKDLPGVRYHIIRGTLDAAGVAKRMQGRSKYGAKRPKSSAAAK</sequence>